<name>ILVD3_AROAE</name>
<gene>
    <name evidence="1" type="primary">ilvD3</name>
    <name type="ordered locus">AZOSEA38680</name>
    <name type="ORF">ebA6761</name>
</gene>
<evidence type="ECO:0000255" key="1">
    <source>
        <dbReference type="HAMAP-Rule" id="MF_00012"/>
    </source>
</evidence>
<protein>
    <recommendedName>
        <fullName evidence="1">Dihydroxy-acid dehydratase 3</fullName>
        <shortName evidence="1">DAD 3</shortName>
        <ecNumber evidence="1">4.2.1.9</ecNumber>
    </recommendedName>
</protein>
<organism>
    <name type="scientific">Aromatoleum aromaticum (strain DSM 19018 / LMG 30748 / EbN1)</name>
    <name type="common">Azoarcus sp. (strain EbN1)</name>
    <dbReference type="NCBI Taxonomy" id="76114"/>
    <lineage>
        <taxon>Bacteria</taxon>
        <taxon>Pseudomonadati</taxon>
        <taxon>Pseudomonadota</taxon>
        <taxon>Betaproteobacteria</taxon>
        <taxon>Rhodocyclales</taxon>
        <taxon>Rhodocyclaceae</taxon>
        <taxon>Aromatoleum</taxon>
    </lineage>
</organism>
<comment type="function">
    <text evidence="1">Functions in the biosynthesis of branched-chain amino acids. Catalyzes the dehydration of (2R,3R)-2,3-dihydroxy-3-methylpentanoate (2,3-dihydroxy-3-methylvalerate) into 2-oxo-3-methylpentanoate (2-oxo-3-methylvalerate) and of (2R)-2,3-dihydroxy-3-methylbutanoate (2,3-dihydroxyisovalerate) into 2-oxo-3-methylbutanoate (2-oxoisovalerate), the penultimate precursor to L-isoleucine and L-valine, respectively.</text>
</comment>
<comment type="catalytic activity">
    <reaction evidence="1">
        <text>(2R)-2,3-dihydroxy-3-methylbutanoate = 3-methyl-2-oxobutanoate + H2O</text>
        <dbReference type="Rhea" id="RHEA:24809"/>
        <dbReference type="ChEBI" id="CHEBI:11851"/>
        <dbReference type="ChEBI" id="CHEBI:15377"/>
        <dbReference type="ChEBI" id="CHEBI:49072"/>
        <dbReference type="EC" id="4.2.1.9"/>
    </reaction>
    <physiologicalReaction direction="left-to-right" evidence="1">
        <dbReference type="Rhea" id="RHEA:24810"/>
    </physiologicalReaction>
</comment>
<comment type="catalytic activity">
    <reaction evidence="1">
        <text>(2R,3R)-2,3-dihydroxy-3-methylpentanoate = (S)-3-methyl-2-oxopentanoate + H2O</text>
        <dbReference type="Rhea" id="RHEA:27694"/>
        <dbReference type="ChEBI" id="CHEBI:15377"/>
        <dbReference type="ChEBI" id="CHEBI:35146"/>
        <dbReference type="ChEBI" id="CHEBI:49258"/>
        <dbReference type="EC" id="4.2.1.9"/>
    </reaction>
    <physiologicalReaction direction="left-to-right" evidence="1">
        <dbReference type="Rhea" id="RHEA:27695"/>
    </physiologicalReaction>
</comment>
<comment type="cofactor">
    <cofactor evidence="1">
        <name>[2Fe-2S] cluster</name>
        <dbReference type="ChEBI" id="CHEBI:190135"/>
    </cofactor>
    <text evidence="1">Binds 1 [2Fe-2S] cluster per subunit. This cluster acts as a Lewis acid cofactor.</text>
</comment>
<comment type="cofactor">
    <cofactor evidence="1">
        <name>Mg(2+)</name>
        <dbReference type="ChEBI" id="CHEBI:18420"/>
    </cofactor>
</comment>
<comment type="pathway">
    <text evidence="1">Amino-acid biosynthesis; L-isoleucine biosynthesis; L-isoleucine from 2-oxobutanoate: step 3/4.</text>
</comment>
<comment type="pathway">
    <text evidence="1">Amino-acid biosynthesis; L-valine biosynthesis; L-valine from pyruvate: step 3/4.</text>
</comment>
<comment type="subunit">
    <text evidence="1">Homodimer.</text>
</comment>
<comment type="similarity">
    <text evidence="1">Belongs to the IlvD/Edd family.</text>
</comment>
<keyword id="KW-0001">2Fe-2S</keyword>
<keyword id="KW-0028">Amino-acid biosynthesis</keyword>
<keyword id="KW-0100">Branched-chain amino acid biosynthesis</keyword>
<keyword id="KW-0408">Iron</keyword>
<keyword id="KW-0411">Iron-sulfur</keyword>
<keyword id="KW-0456">Lyase</keyword>
<keyword id="KW-0460">Magnesium</keyword>
<keyword id="KW-0479">Metal-binding</keyword>
<keyword id="KW-1185">Reference proteome</keyword>
<reference key="1">
    <citation type="journal article" date="2005" name="Arch. Microbiol.">
        <title>The genome sequence of an anaerobic aromatic-degrading denitrifying bacterium, strain EbN1.</title>
        <authorList>
            <person name="Rabus R."/>
            <person name="Kube M."/>
            <person name="Heider J."/>
            <person name="Beck A."/>
            <person name="Heitmann K."/>
            <person name="Widdel F."/>
            <person name="Reinhardt R."/>
        </authorList>
    </citation>
    <scope>NUCLEOTIDE SEQUENCE [LARGE SCALE GENOMIC DNA]</scope>
    <source>
        <strain>DSM 19018 / LMG 30748 / EbN1</strain>
    </source>
</reference>
<accession>Q5NY71</accession>
<sequence>MSDPTRPARIDERSRNVTEGVMRAPNRSMYYAMGYRETDFSKPMVGVASAHSTITPCNSGLQPLADTVVAALKEAGANPQLFGTPTVSDGIGMGTEGMKYSLVSREVIADSIETCVNGLWQDGVVVIGGCDKNMPGGMMALVRTNVPGIYVYGGTIKPGHYQGRDLNIISVFEAVGEFTAGRLDPVDFKEIEKRACPGSGSCGGMYTANTMSAAFEALGMSLPYSSTMANEDAEKLASAAESARVLVEAIKRGLRPRDIVTREAIENAVSVIMATGGSTNAVLHFLAIAHAAEVPWTIDDFECIRRRVPVIVDMKPSGHYLATDLHQAGGIPQVMKLLLEAGLLHGECVTITGRTIAEVLENVPAAPRADQGVIRTLSDPLYAEGHLAILRGNLSPEGCVAKISGLKNPAITGPARVFDSEDDAMGAIMARRIVEGDVVVIRYEGPKGGPGMREMLAPTSALVGQGLGESVGLITDGRFSGGTWGMVVGHVSPEAFVGGPIALVRDGDSVTIDAHRQLVQLNVGDEELARRAADWTPPSPRYTRGVLAKFAKLTSSASKGAVTDLDL</sequence>
<proteinExistence type="inferred from homology"/>
<dbReference type="EC" id="4.2.1.9" evidence="1"/>
<dbReference type="EMBL" id="CR555306">
    <property type="protein sequence ID" value="CAI09993.1"/>
    <property type="molecule type" value="Genomic_DNA"/>
</dbReference>
<dbReference type="RefSeq" id="WP_011239642.1">
    <property type="nucleotide sequence ID" value="NC_006513.1"/>
</dbReference>
<dbReference type="SMR" id="Q5NY71"/>
<dbReference type="STRING" id="76114.ebA6761"/>
<dbReference type="KEGG" id="eba:ebA6761"/>
<dbReference type="eggNOG" id="COG0129">
    <property type="taxonomic scope" value="Bacteria"/>
</dbReference>
<dbReference type="HOGENOM" id="CLU_014271_4_2_4"/>
<dbReference type="OrthoDB" id="9807077at2"/>
<dbReference type="UniPathway" id="UPA00047">
    <property type="reaction ID" value="UER00057"/>
</dbReference>
<dbReference type="UniPathway" id="UPA00049">
    <property type="reaction ID" value="UER00061"/>
</dbReference>
<dbReference type="Proteomes" id="UP000006552">
    <property type="component" value="Chromosome"/>
</dbReference>
<dbReference type="GO" id="GO:0051537">
    <property type="term" value="F:2 iron, 2 sulfur cluster binding"/>
    <property type="evidence" value="ECO:0007669"/>
    <property type="project" value="UniProtKB-UniRule"/>
</dbReference>
<dbReference type="GO" id="GO:0004160">
    <property type="term" value="F:dihydroxy-acid dehydratase activity"/>
    <property type="evidence" value="ECO:0007669"/>
    <property type="project" value="UniProtKB-UniRule"/>
</dbReference>
<dbReference type="GO" id="GO:0000287">
    <property type="term" value="F:magnesium ion binding"/>
    <property type="evidence" value="ECO:0007669"/>
    <property type="project" value="UniProtKB-UniRule"/>
</dbReference>
<dbReference type="GO" id="GO:0009097">
    <property type="term" value="P:isoleucine biosynthetic process"/>
    <property type="evidence" value="ECO:0007669"/>
    <property type="project" value="UniProtKB-UniRule"/>
</dbReference>
<dbReference type="GO" id="GO:0009099">
    <property type="term" value="P:L-valine biosynthetic process"/>
    <property type="evidence" value="ECO:0007669"/>
    <property type="project" value="UniProtKB-UniRule"/>
</dbReference>
<dbReference type="FunFam" id="3.50.30.80:FF:000001">
    <property type="entry name" value="Dihydroxy-acid dehydratase"/>
    <property type="match status" value="1"/>
</dbReference>
<dbReference type="Gene3D" id="3.50.30.80">
    <property type="entry name" value="IlvD/EDD C-terminal domain-like"/>
    <property type="match status" value="1"/>
</dbReference>
<dbReference type="HAMAP" id="MF_00012">
    <property type="entry name" value="IlvD"/>
    <property type="match status" value="1"/>
</dbReference>
<dbReference type="InterPro" id="IPR050165">
    <property type="entry name" value="DHAD_IlvD/Edd"/>
</dbReference>
<dbReference type="InterPro" id="IPR042096">
    <property type="entry name" value="Dihydro-acid_dehy_C"/>
</dbReference>
<dbReference type="InterPro" id="IPR004404">
    <property type="entry name" value="DihydroxyA_deHydtase"/>
</dbReference>
<dbReference type="InterPro" id="IPR020558">
    <property type="entry name" value="DiOHA_6PGluconate_deHydtase_CS"/>
</dbReference>
<dbReference type="InterPro" id="IPR056740">
    <property type="entry name" value="ILV_EDD_C"/>
</dbReference>
<dbReference type="InterPro" id="IPR000581">
    <property type="entry name" value="ILV_EDD_N"/>
</dbReference>
<dbReference type="InterPro" id="IPR037237">
    <property type="entry name" value="IlvD/EDD_N"/>
</dbReference>
<dbReference type="NCBIfam" id="TIGR00110">
    <property type="entry name" value="ilvD"/>
    <property type="match status" value="1"/>
</dbReference>
<dbReference type="NCBIfam" id="NF002068">
    <property type="entry name" value="PRK00911.1"/>
    <property type="match status" value="1"/>
</dbReference>
<dbReference type="PANTHER" id="PTHR21000">
    <property type="entry name" value="DIHYDROXY-ACID DEHYDRATASE DAD"/>
    <property type="match status" value="1"/>
</dbReference>
<dbReference type="PANTHER" id="PTHR21000:SF5">
    <property type="entry name" value="DIHYDROXY-ACID DEHYDRATASE, MITOCHONDRIAL"/>
    <property type="match status" value="1"/>
</dbReference>
<dbReference type="Pfam" id="PF24877">
    <property type="entry name" value="ILV_EDD_C"/>
    <property type="match status" value="1"/>
</dbReference>
<dbReference type="Pfam" id="PF00920">
    <property type="entry name" value="ILVD_EDD_N"/>
    <property type="match status" value="1"/>
</dbReference>
<dbReference type="SUPFAM" id="SSF143975">
    <property type="entry name" value="IlvD/EDD N-terminal domain-like"/>
    <property type="match status" value="1"/>
</dbReference>
<dbReference type="SUPFAM" id="SSF52016">
    <property type="entry name" value="LeuD/IlvD-like"/>
    <property type="match status" value="1"/>
</dbReference>
<dbReference type="PROSITE" id="PS00886">
    <property type="entry name" value="ILVD_EDD_1"/>
    <property type="match status" value="1"/>
</dbReference>
<dbReference type="PROSITE" id="PS00887">
    <property type="entry name" value="ILVD_EDD_2"/>
    <property type="match status" value="1"/>
</dbReference>
<feature type="chain" id="PRO_0000225366" description="Dihydroxy-acid dehydratase 3">
    <location>
        <begin position="1"/>
        <end position="567"/>
    </location>
</feature>
<feature type="active site" description="Proton acceptor" evidence="1">
    <location>
        <position position="480"/>
    </location>
</feature>
<feature type="binding site" evidence="1">
    <location>
        <position position="57"/>
    </location>
    <ligand>
        <name>[2Fe-2S] cluster</name>
        <dbReference type="ChEBI" id="CHEBI:190135"/>
    </ligand>
</feature>
<feature type="binding site" evidence="1">
    <location>
        <position position="89"/>
    </location>
    <ligand>
        <name>Mg(2+)</name>
        <dbReference type="ChEBI" id="CHEBI:18420"/>
    </ligand>
</feature>
<feature type="binding site" evidence="1">
    <location>
        <position position="130"/>
    </location>
    <ligand>
        <name>[2Fe-2S] cluster</name>
        <dbReference type="ChEBI" id="CHEBI:190135"/>
    </ligand>
</feature>
<feature type="binding site" evidence="1">
    <location>
        <position position="131"/>
    </location>
    <ligand>
        <name>Mg(2+)</name>
        <dbReference type="ChEBI" id="CHEBI:18420"/>
    </ligand>
</feature>
<feature type="binding site" description="via carbamate group" evidence="1">
    <location>
        <position position="132"/>
    </location>
    <ligand>
        <name>Mg(2+)</name>
        <dbReference type="ChEBI" id="CHEBI:18420"/>
    </ligand>
</feature>
<feature type="binding site" evidence="1">
    <location>
        <position position="202"/>
    </location>
    <ligand>
        <name>[2Fe-2S] cluster</name>
        <dbReference type="ChEBI" id="CHEBI:190135"/>
    </ligand>
</feature>
<feature type="binding site" evidence="1">
    <location>
        <position position="454"/>
    </location>
    <ligand>
        <name>Mg(2+)</name>
        <dbReference type="ChEBI" id="CHEBI:18420"/>
    </ligand>
</feature>
<feature type="modified residue" description="N6-carboxylysine" evidence="1">
    <location>
        <position position="132"/>
    </location>
</feature>